<reference key="1">
    <citation type="journal article" date="2011" name="PLoS ONE">
        <title>The genome of Akkermansia muciniphila, a dedicated intestinal mucin degrader, and its use in exploring intestinal metagenomes.</title>
        <authorList>
            <person name="van Passel M.W."/>
            <person name="Kant R."/>
            <person name="Zoetendal E.G."/>
            <person name="Plugge C.M."/>
            <person name="Derrien M."/>
            <person name="Malfatti S.A."/>
            <person name="Chain P.S."/>
            <person name="Woyke T."/>
            <person name="Palva A."/>
            <person name="de Vos W.M."/>
            <person name="Smidt H."/>
        </authorList>
    </citation>
    <scope>NUCLEOTIDE SEQUENCE [LARGE SCALE GENOMIC DNA]</scope>
    <source>
        <strain>ATCC BAA-835 / DSM 22959 / JCM 33894 / BCRC 81048 / CCUG 64013 / CIP 107961 / Muc</strain>
    </source>
</reference>
<organism>
    <name type="scientific">Akkermansia muciniphila (strain ATCC BAA-835 / DSM 22959 / JCM 33894 / BCRC 81048 / CCUG 64013 / CIP 107961 / Muc)</name>
    <dbReference type="NCBI Taxonomy" id="349741"/>
    <lineage>
        <taxon>Bacteria</taxon>
        <taxon>Pseudomonadati</taxon>
        <taxon>Verrucomicrobiota</taxon>
        <taxon>Verrucomicrobiia</taxon>
        <taxon>Verrucomicrobiales</taxon>
        <taxon>Akkermansiaceae</taxon>
        <taxon>Akkermansia</taxon>
    </lineage>
</organism>
<gene>
    <name evidence="1" type="primary">fmt</name>
    <name type="ordered locus">Amuc_0972</name>
</gene>
<evidence type="ECO:0000255" key="1">
    <source>
        <dbReference type="HAMAP-Rule" id="MF_00182"/>
    </source>
</evidence>
<comment type="function">
    <text evidence="1">Attaches a formyl group to the free amino group of methionyl-tRNA(fMet). The formyl group appears to play a dual role in the initiator identity of N-formylmethionyl-tRNA by promoting its recognition by IF2 and preventing the misappropriation of this tRNA by the elongation apparatus.</text>
</comment>
<comment type="catalytic activity">
    <reaction evidence="1">
        <text>L-methionyl-tRNA(fMet) + (6R)-10-formyltetrahydrofolate = N-formyl-L-methionyl-tRNA(fMet) + (6S)-5,6,7,8-tetrahydrofolate + H(+)</text>
        <dbReference type="Rhea" id="RHEA:24380"/>
        <dbReference type="Rhea" id="RHEA-COMP:9952"/>
        <dbReference type="Rhea" id="RHEA-COMP:9953"/>
        <dbReference type="ChEBI" id="CHEBI:15378"/>
        <dbReference type="ChEBI" id="CHEBI:57453"/>
        <dbReference type="ChEBI" id="CHEBI:78530"/>
        <dbReference type="ChEBI" id="CHEBI:78844"/>
        <dbReference type="ChEBI" id="CHEBI:195366"/>
        <dbReference type="EC" id="2.1.2.9"/>
    </reaction>
</comment>
<comment type="similarity">
    <text evidence="1">Belongs to the Fmt family.</text>
</comment>
<proteinExistence type="inferred from homology"/>
<feature type="chain" id="PRO_1000098373" description="Methionyl-tRNA formyltransferase">
    <location>
        <begin position="1"/>
        <end position="314"/>
    </location>
</feature>
<feature type="binding site" evidence="1">
    <location>
        <begin position="108"/>
        <end position="111"/>
    </location>
    <ligand>
        <name>(6S)-5,6,7,8-tetrahydrofolate</name>
        <dbReference type="ChEBI" id="CHEBI:57453"/>
    </ligand>
</feature>
<accession>B2UQR9</accession>
<protein>
    <recommendedName>
        <fullName evidence="1">Methionyl-tRNA formyltransferase</fullName>
        <ecNumber evidence="1">2.1.2.9</ecNumber>
    </recommendedName>
</protein>
<dbReference type="EC" id="2.1.2.9" evidence="1"/>
<dbReference type="EMBL" id="CP001071">
    <property type="protein sequence ID" value="ACD04804.1"/>
    <property type="molecule type" value="Genomic_DNA"/>
</dbReference>
<dbReference type="RefSeq" id="WP_012420019.1">
    <property type="nucleotide sequence ID" value="NZ_CP071807.1"/>
</dbReference>
<dbReference type="SMR" id="B2UQR9"/>
<dbReference type="STRING" id="349741.Amuc_0972"/>
<dbReference type="PaxDb" id="349741-Amuc_0972"/>
<dbReference type="GeneID" id="60880138"/>
<dbReference type="KEGG" id="amu:Amuc_0972"/>
<dbReference type="eggNOG" id="COG0223">
    <property type="taxonomic scope" value="Bacteria"/>
</dbReference>
<dbReference type="HOGENOM" id="CLU_033347_1_1_0"/>
<dbReference type="OrthoDB" id="9802815at2"/>
<dbReference type="BioCyc" id="AMUC349741:G1GBX-1045-MONOMER"/>
<dbReference type="Proteomes" id="UP000001031">
    <property type="component" value="Chromosome"/>
</dbReference>
<dbReference type="GO" id="GO:0005829">
    <property type="term" value="C:cytosol"/>
    <property type="evidence" value="ECO:0007669"/>
    <property type="project" value="TreeGrafter"/>
</dbReference>
<dbReference type="GO" id="GO:0004479">
    <property type="term" value="F:methionyl-tRNA formyltransferase activity"/>
    <property type="evidence" value="ECO:0007669"/>
    <property type="project" value="UniProtKB-UniRule"/>
</dbReference>
<dbReference type="CDD" id="cd08646">
    <property type="entry name" value="FMT_core_Met-tRNA-FMT_N"/>
    <property type="match status" value="1"/>
</dbReference>
<dbReference type="CDD" id="cd08704">
    <property type="entry name" value="Met_tRNA_FMT_C"/>
    <property type="match status" value="1"/>
</dbReference>
<dbReference type="Gene3D" id="3.10.25.10">
    <property type="entry name" value="Formyl transferase, C-terminal domain"/>
    <property type="match status" value="1"/>
</dbReference>
<dbReference type="Gene3D" id="3.40.50.170">
    <property type="entry name" value="Formyl transferase, N-terminal domain"/>
    <property type="match status" value="1"/>
</dbReference>
<dbReference type="HAMAP" id="MF_00182">
    <property type="entry name" value="Formyl_trans"/>
    <property type="match status" value="1"/>
</dbReference>
<dbReference type="InterPro" id="IPR005794">
    <property type="entry name" value="Fmt"/>
</dbReference>
<dbReference type="InterPro" id="IPR005793">
    <property type="entry name" value="Formyl_trans_C"/>
</dbReference>
<dbReference type="InterPro" id="IPR037022">
    <property type="entry name" value="Formyl_trans_C_sf"/>
</dbReference>
<dbReference type="InterPro" id="IPR002376">
    <property type="entry name" value="Formyl_transf_N"/>
</dbReference>
<dbReference type="InterPro" id="IPR036477">
    <property type="entry name" value="Formyl_transf_N_sf"/>
</dbReference>
<dbReference type="InterPro" id="IPR011034">
    <property type="entry name" value="Formyl_transferase-like_C_sf"/>
</dbReference>
<dbReference type="InterPro" id="IPR044135">
    <property type="entry name" value="Met-tRNA-FMT_C"/>
</dbReference>
<dbReference type="InterPro" id="IPR041711">
    <property type="entry name" value="Met-tRNA-FMT_N"/>
</dbReference>
<dbReference type="NCBIfam" id="TIGR00460">
    <property type="entry name" value="fmt"/>
    <property type="match status" value="1"/>
</dbReference>
<dbReference type="PANTHER" id="PTHR11138">
    <property type="entry name" value="METHIONYL-TRNA FORMYLTRANSFERASE"/>
    <property type="match status" value="1"/>
</dbReference>
<dbReference type="PANTHER" id="PTHR11138:SF5">
    <property type="entry name" value="METHIONYL-TRNA FORMYLTRANSFERASE, MITOCHONDRIAL"/>
    <property type="match status" value="1"/>
</dbReference>
<dbReference type="Pfam" id="PF02911">
    <property type="entry name" value="Formyl_trans_C"/>
    <property type="match status" value="1"/>
</dbReference>
<dbReference type="Pfam" id="PF00551">
    <property type="entry name" value="Formyl_trans_N"/>
    <property type="match status" value="1"/>
</dbReference>
<dbReference type="SUPFAM" id="SSF50486">
    <property type="entry name" value="FMT C-terminal domain-like"/>
    <property type="match status" value="1"/>
</dbReference>
<dbReference type="SUPFAM" id="SSF53328">
    <property type="entry name" value="Formyltransferase"/>
    <property type="match status" value="1"/>
</dbReference>
<sequence length="314" mass="34190">MRIVFMGTGDIAIPAFRSLIRHSDLAGLVTQPDRPVGRHQVLTAPAIKNIAREAGIPVLQPHSLRSPDALSNLRRLNPDLIVVMAYGQILSQEVIDMAPMGCINAHASLLPRHRGAACIQSAIKSGDAETGITIMHIVRKLDAGDIIAQISTPLEGSETGGTLHDKLARMTPDVLLPVIHSIEKGTATRIRQQEILATYAPKLLRADGKIDWTRPAEEIGRMIRAYDPWPGTFTNYWNRKKRIRNMKIFPGFSILPEAEGKPGQVLSAGEQGLLIACGSGGLLVTDVQLEGSTRMNISQLIAGHPNLKDIHFDV</sequence>
<name>FMT_AKKM8</name>
<keyword id="KW-0648">Protein biosynthesis</keyword>
<keyword id="KW-1185">Reference proteome</keyword>
<keyword id="KW-0808">Transferase</keyword>